<sequence length="310" mass="34944">MNELPLHLLNMRSLTRDHIEKLIQRANYFLTQGMEKNSVFETLKGHVVANLFFEPSTRTRNSFEIAAKRLGAMVLNPNLKISAISKGETLFDTIKTLEAMGVYFFIVRHSENETPEQIAKQLSSGVVINAGDGNHQHPSQALIDLMTIKQHKPHWNKLCVTIIGDIRHSRVANSLMDGLVTMGVPEIRLVGPSSLLPDKVGNDSIKKFTELKPSLLNSDVIVTLRLQKERHDNSVDIDAFRGSFRLTPEKLYSAKPDAIVMHPGPVNREVEINSDVADNQQSVILQQVRNGVAMRMAVLELFLLRDFRFF</sequence>
<evidence type="ECO:0000255" key="1">
    <source>
        <dbReference type="HAMAP-Rule" id="MF_00001"/>
    </source>
</evidence>
<gene>
    <name evidence="1" type="primary">pyrB</name>
    <name type="ordered locus">CBU_2095</name>
</gene>
<proteinExistence type="inferred from homology"/>
<reference key="1">
    <citation type="journal article" date="2003" name="Proc. Natl. Acad. Sci. U.S.A.">
        <title>Complete genome sequence of the Q-fever pathogen, Coxiella burnetii.</title>
        <authorList>
            <person name="Seshadri R."/>
            <person name="Paulsen I.T."/>
            <person name="Eisen J.A."/>
            <person name="Read T.D."/>
            <person name="Nelson K.E."/>
            <person name="Nelson W.C."/>
            <person name="Ward N.L."/>
            <person name="Tettelin H."/>
            <person name="Davidsen T.M."/>
            <person name="Beanan M.J."/>
            <person name="DeBoy R.T."/>
            <person name="Daugherty S.C."/>
            <person name="Brinkac L.M."/>
            <person name="Madupu R."/>
            <person name="Dodson R.J."/>
            <person name="Khouri H.M."/>
            <person name="Lee K.H."/>
            <person name="Carty H.A."/>
            <person name="Scanlan D."/>
            <person name="Heinzen R.A."/>
            <person name="Thompson H.A."/>
            <person name="Samuel J.E."/>
            <person name="Fraser C.M."/>
            <person name="Heidelberg J.F."/>
        </authorList>
    </citation>
    <scope>NUCLEOTIDE SEQUENCE [LARGE SCALE GENOMIC DNA]</scope>
    <source>
        <strain>RSA 493 / Nine Mile phase I</strain>
    </source>
</reference>
<name>PYRB_COXBU</name>
<protein>
    <recommendedName>
        <fullName evidence="1">Aspartate carbamoyltransferase catalytic subunit</fullName>
        <ecNumber evidence="1">2.1.3.2</ecNumber>
    </recommendedName>
    <alternativeName>
        <fullName evidence="1">Aspartate transcarbamylase</fullName>
        <shortName evidence="1">ATCase</shortName>
    </alternativeName>
</protein>
<accession>Q83A16</accession>
<dbReference type="EC" id="2.1.3.2" evidence="1"/>
<dbReference type="EMBL" id="AE016828">
    <property type="protein sequence ID" value="AAO91579.1"/>
    <property type="molecule type" value="Genomic_DNA"/>
</dbReference>
<dbReference type="RefSeq" id="NP_821065.1">
    <property type="nucleotide sequence ID" value="NC_002971.4"/>
</dbReference>
<dbReference type="RefSeq" id="WP_010958650.1">
    <property type="nucleotide sequence ID" value="NZ_CDBG01000001.1"/>
</dbReference>
<dbReference type="SMR" id="Q83A16"/>
<dbReference type="STRING" id="227377.CBU_2095"/>
<dbReference type="EnsemblBacteria" id="AAO91579">
    <property type="protein sequence ID" value="AAO91579"/>
    <property type="gene ID" value="CBU_2095"/>
</dbReference>
<dbReference type="GeneID" id="1210008"/>
<dbReference type="KEGG" id="cbu:CBU_2095"/>
<dbReference type="PATRIC" id="fig|227377.7.peg.2086"/>
<dbReference type="eggNOG" id="COG0540">
    <property type="taxonomic scope" value="Bacteria"/>
</dbReference>
<dbReference type="HOGENOM" id="CLU_043846_2_0_6"/>
<dbReference type="OrthoDB" id="9774690at2"/>
<dbReference type="UniPathway" id="UPA00070">
    <property type="reaction ID" value="UER00116"/>
</dbReference>
<dbReference type="Proteomes" id="UP000002671">
    <property type="component" value="Chromosome"/>
</dbReference>
<dbReference type="GO" id="GO:0016597">
    <property type="term" value="F:amino acid binding"/>
    <property type="evidence" value="ECO:0007669"/>
    <property type="project" value="InterPro"/>
</dbReference>
<dbReference type="GO" id="GO:0004070">
    <property type="term" value="F:aspartate carbamoyltransferase activity"/>
    <property type="evidence" value="ECO:0007669"/>
    <property type="project" value="UniProtKB-UniRule"/>
</dbReference>
<dbReference type="GO" id="GO:0006207">
    <property type="term" value="P:'de novo' pyrimidine nucleobase biosynthetic process"/>
    <property type="evidence" value="ECO:0007669"/>
    <property type="project" value="InterPro"/>
</dbReference>
<dbReference type="GO" id="GO:0044205">
    <property type="term" value="P:'de novo' UMP biosynthetic process"/>
    <property type="evidence" value="ECO:0007669"/>
    <property type="project" value="UniProtKB-UniRule"/>
</dbReference>
<dbReference type="GO" id="GO:0006520">
    <property type="term" value="P:amino acid metabolic process"/>
    <property type="evidence" value="ECO:0007669"/>
    <property type="project" value="InterPro"/>
</dbReference>
<dbReference type="Gene3D" id="3.40.50.1370">
    <property type="entry name" value="Aspartate/ornithine carbamoyltransferase"/>
    <property type="match status" value="2"/>
</dbReference>
<dbReference type="HAMAP" id="MF_00001">
    <property type="entry name" value="Asp_carb_tr"/>
    <property type="match status" value="1"/>
</dbReference>
<dbReference type="InterPro" id="IPR006132">
    <property type="entry name" value="Asp/Orn_carbamoyltranf_P-bd"/>
</dbReference>
<dbReference type="InterPro" id="IPR006130">
    <property type="entry name" value="Asp/Orn_carbamoylTrfase"/>
</dbReference>
<dbReference type="InterPro" id="IPR036901">
    <property type="entry name" value="Asp/Orn_carbamoylTrfase_sf"/>
</dbReference>
<dbReference type="InterPro" id="IPR002082">
    <property type="entry name" value="Asp_carbamoyltransf"/>
</dbReference>
<dbReference type="InterPro" id="IPR006131">
    <property type="entry name" value="Asp_carbamoyltransf_Asp/Orn-bd"/>
</dbReference>
<dbReference type="NCBIfam" id="TIGR00670">
    <property type="entry name" value="asp_carb_tr"/>
    <property type="match status" value="1"/>
</dbReference>
<dbReference type="NCBIfam" id="NF002032">
    <property type="entry name" value="PRK00856.1"/>
    <property type="match status" value="1"/>
</dbReference>
<dbReference type="NCBIfam" id="NF010387">
    <property type="entry name" value="PRK13814.1"/>
    <property type="match status" value="1"/>
</dbReference>
<dbReference type="PANTHER" id="PTHR45753:SF6">
    <property type="entry name" value="ASPARTATE CARBAMOYLTRANSFERASE"/>
    <property type="match status" value="1"/>
</dbReference>
<dbReference type="PANTHER" id="PTHR45753">
    <property type="entry name" value="ORNITHINE CARBAMOYLTRANSFERASE, MITOCHONDRIAL"/>
    <property type="match status" value="1"/>
</dbReference>
<dbReference type="Pfam" id="PF00185">
    <property type="entry name" value="OTCace"/>
    <property type="match status" value="1"/>
</dbReference>
<dbReference type="Pfam" id="PF02729">
    <property type="entry name" value="OTCace_N"/>
    <property type="match status" value="1"/>
</dbReference>
<dbReference type="PRINTS" id="PR00100">
    <property type="entry name" value="AOTCASE"/>
</dbReference>
<dbReference type="PRINTS" id="PR00101">
    <property type="entry name" value="ATCASE"/>
</dbReference>
<dbReference type="SUPFAM" id="SSF53671">
    <property type="entry name" value="Aspartate/ornithine carbamoyltransferase"/>
    <property type="match status" value="1"/>
</dbReference>
<dbReference type="PROSITE" id="PS00097">
    <property type="entry name" value="CARBAMOYLTRANSFERASE"/>
    <property type="match status" value="1"/>
</dbReference>
<comment type="function">
    <text evidence="1">Catalyzes the condensation of carbamoyl phosphate and aspartate to form carbamoyl aspartate and inorganic phosphate, the committed step in the de novo pyrimidine nucleotide biosynthesis pathway.</text>
</comment>
<comment type="catalytic activity">
    <reaction evidence="1">
        <text>carbamoyl phosphate + L-aspartate = N-carbamoyl-L-aspartate + phosphate + H(+)</text>
        <dbReference type="Rhea" id="RHEA:20013"/>
        <dbReference type="ChEBI" id="CHEBI:15378"/>
        <dbReference type="ChEBI" id="CHEBI:29991"/>
        <dbReference type="ChEBI" id="CHEBI:32814"/>
        <dbReference type="ChEBI" id="CHEBI:43474"/>
        <dbReference type="ChEBI" id="CHEBI:58228"/>
        <dbReference type="EC" id="2.1.3.2"/>
    </reaction>
</comment>
<comment type="pathway">
    <text evidence="1">Pyrimidine metabolism; UMP biosynthesis via de novo pathway; (S)-dihydroorotate from bicarbonate: step 2/3.</text>
</comment>
<comment type="subunit">
    <text evidence="1">Heterododecamer (2C3:3R2) of six catalytic PyrB chains organized as two trimers (C3), and six regulatory PyrI chains organized as three dimers (R2).</text>
</comment>
<comment type="similarity">
    <text evidence="1">Belongs to the aspartate/ornithine carbamoyltransferase superfamily. ATCase family.</text>
</comment>
<feature type="chain" id="PRO_0000113124" description="Aspartate carbamoyltransferase catalytic subunit">
    <location>
        <begin position="1"/>
        <end position="310"/>
    </location>
</feature>
<feature type="binding site" evidence="1">
    <location>
        <position position="58"/>
    </location>
    <ligand>
        <name>carbamoyl phosphate</name>
        <dbReference type="ChEBI" id="CHEBI:58228"/>
    </ligand>
</feature>
<feature type="binding site" evidence="1">
    <location>
        <position position="59"/>
    </location>
    <ligand>
        <name>carbamoyl phosphate</name>
        <dbReference type="ChEBI" id="CHEBI:58228"/>
    </ligand>
</feature>
<feature type="binding site" evidence="1">
    <location>
        <position position="86"/>
    </location>
    <ligand>
        <name>L-aspartate</name>
        <dbReference type="ChEBI" id="CHEBI:29991"/>
    </ligand>
</feature>
<feature type="binding site" evidence="1">
    <location>
        <position position="108"/>
    </location>
    <ligand>
        <name>carbamoyl phosphate</name>
        <dbReference type="ChEBI" id="CHEBI:58228"/>
    </ligand>
</feature>
<feature type="binding site" evidence="1">
    <location>
        <position position="137"/>
    </location>
    <ligand>
        <name>carbamoyl phosphate</name>
        <dbReference type="ChEBI" id="CHEBI:58228"/>
    </ligand>
</feature>
<feature type="binding site" evidence="1">
    <location>
        <position position="140"/>
    </location>
    <ligand>
        <name>carbamoyl phosphate</name>
        <dbReference type="ChEBI" id="CHEBI:58228"/>
    </ligand>
</feature>
<feature type="binding site" evidence="1">
    <location>
        <position position="170"/>
    </location>
    <ligand>
        <name>L-aspartate</name>
        <dbReference type="ChEBI" id="CHEBI:29991"/>
    </ligand>
</feature>
<feature type="binding site" evidence="1">
    <location>
        <position position="225"/>
    </location>
    <ligand>
        <name>L-aspartate</name>
        <dbReference type="ChEBI" id="CHEBI:29991"/>
    </ligand>
</feature>
<feature type="binding site" evidence="1">
    <location>
        <position position="264"/>
    </location>
    <ligand>
        <name>carbamoyl phosphate</name>
        <dbReference type="ChEBI" id="CHEBI:58228"/>
    </ligand>
</feature>
<feature type="binding site" evidence="1">
    <location>
        <position position="265"/>
    </location>
    <ligand>
        <name>carbamoyl phosphate</name>
        <dbReference type="ChEBI" id="CHEBI:58228"/>
    </ligand>
</feature>
<organism>
    <name type="scientific">Coxiella burnetii (strain RSA 493 / Nine Mile phase I)</name>
    <dbReference type="NCBI Taxonomy" id="227377"/>
    <lineage>
        <taxon>Bacteria</taxon>
        <taxon>Pseudomonadati</taxon>
        <taxon>Pseudomonadota</taxon>
        <taxon>Gammaproteobacteria</taxon>
        <taxon>Legionellales</taxon>
        <taxon>Coxiellaceae</taxon>
        <taxon>Coxiella</taxon>
    </lineage>
</organism>
<keyword id="KW-0665">Pyrimidine biosynthesis</keyword>
<keyword id="KW-1185">Reference proteome</keyword>
<keyword id="KW-0808">Transferase</keyword>